<reference key="1">
    <citation type="journal article" date="1989" name="Mol. Microbiol.">
        <title>Molecular analysis of linear plasmid-encoded major surface proteins, OspA and OspB, of the Lyme disease spirochaete Borrelia burgdorferi.</title>
        <authorList>
            <person name="Bergstroem S."/>
            <person name="Bundoc V."/>
            <person name="Barbour A.G."/>
        </authorList>
    </citation>
    <scope>NUCLEOTIDE SEQUENCE [GENOMIC DNA]</scope>
    <source>
        <strain>ATCC 35210 / DSM 4680 / CIP 102532 / B31</strain>
    </source>
</reference>
<reference key="2">
    <citation type="journal article" date="1995" name="Med. Microbiol. Immunol.">
        <title>Sequence analysis of ospA genes shows homogeneity within Borrelia burgdorferi sensu stricto and Borrelia afzelii strains but reveals major subgroups within the Borrelia garinii species.</title>
        <authorList>
            <person name="Will G."/>
            <person name="Jauris-Heipke S."/>
            <person name="Schwab E."/>
            <person name="Busch U."/>
            <person name="Roessler D."/>
            <person name="Soutschek E."/>
            <person name="Wilske B."/>
            <person name="Preac-Mursic V."/>
        </authorList>
    </citation>
    <scope>NUCLEOTIDE SEQUENCE [GENOMIC DNA]</scope>
    <source>
        <strain>KA</strain>
        <strain>PBre</strain>
    </source>
</reference>
<reference key="3">
    <citation type="journal article" date="1993" name="Proc. Natl. Acad. Sci. U.S.A.">
        <title>Borrelia burgdorferi is clonal: implications for taxonomy and vaccine development.</title>
        <authorList>
            <person name="Dykhuizen D.E."/>
            <person name="Polin D.S."/>
            <person name="Dunn J.J."/>
            <person name="Wilske B."/>
            <person name="Preac-Mursic V."/>
            <person name="Dattwyler R.J."/>
            <person name="Luft B.J."/>
        </authorList>
    </citation>
    <scope>NUCLEOTIDE SEQUENCE [GENOMIC DNA]</scope>
    <source>
        <strain>KA</strain>
    </source>
</reference>
<reference key="4">
    <citation type="journal article" date="1997" name="Nature">
        <title>Genomic sequence of a Lyme disease spirochaete, Borrelia burgdorferi.</title>
        <authorList>
            <person name="Fraser C.M."/>
            <person name="Casjens S."/>
            <person name="Huang W.M."/>
            <person name="Sutton G.G."/>
            <person name="Clayton R.A."/>
            <person name="Lathigra R."/>
            <person name="White O."/>
            <person name="Ketchum K.A."/>
            <person name="Dodson R.J."/>
            <person name="Hickey E.K."/>
            <person name="Gwinn M.L."/>
            <person name="Dougherty B.A."/>
            <person name="Tomb J.-F."/>
            <person name="Fleischmann R.D."/>
            <person name="Richardson D.L."/>
            <person name="Peterson J.D."/>
            <person name="Kerlavage A.R."/>
            <person name="Quackenbush J."/>
            <person name="Salzberg S.L."/>
            <person name="Hanson M."/>
            <person name="van Vugt R."/>
            <person name="Palmer N."/>
            <person name="Adams M.D."/>
            <person name="Gocayne J.D."/>
            <person name="Weidman J.F."/>
            <person name="Utterback T.R."/>
            <person name="Watthey L."/>
            <person name="McDonald L.A."/>
            <person name="Artiach P."/>
            <person name="Bowman C."/>
            <person name="Garland S.A."/>
            <person name="Fujii C."/>
            <person name="Cotton M.D."/>
            <person name="Horst K."/>
            <person name="Roberts K.M."/>
            <person name="Hatch B."/>
            <person name="Smith H.O."/>
            <person name="Venter J.C."/>
        </authorList>
    </citation>
    <scope>NUCLEOTIDE SEQUENCE [LARGE SCALE GENOMIC DNA]</scope>
    <source>
        <strain>ATCC 35210 / DSM 4680 / CIP 102532 / B31</strain>
    </source>
</reference>
<reference key="5">
    <citation type="journal article" date="1994" name="Mol. Biol. Evol.">
        <title>Sequence variation in the outer-surface-protein genes of Borrelia burgdorferi.</title>
        <authorList>
            <person name="Caporale D.A."/>
            <person name="Kocher T.D."/>
        </authorList>
    </citation>
    <scope>NUCLEOTIDE SEQUENCE [GENOMIC DNA] OF 24-273</scope>
    <source>
        <strain>19535NY2</strain>
        <strain>21343WI</strain>
        <strain>27985CT2</strain>
        <strain>41552MA</strain>
        <strain>42373NY3</strain>
        <strain>CA3</strain>
        <strain>CA7</strain>
        <strain>CA8</strain>
        <strain>HB19CT1</strain>
    </source>
</reference>
<reference key="6">
    <citation type="journal article" date="1999" name="Science">
        <title>Host defense mechanisms triggered by microbial lipoproteins through Toll-like receptors.</title>
        <authorList>
            <person name="Brightbill H.D."/>
            <person name="Libraty D.H."/>
            <person name="Krutzik S.R."/>
            <person name="Yang R.B."/>
            <person name="Belisle J.T."/>
            <person name="Bleharski J.R."/>
            <person name="Maitland M."/>
            <person name="Norgard M.V."/>
            <person name="Plevy S.E."/>
            <person name="Smale S.T."/>
            <person name="Brennan P.J."/>
            <person name="Bloom B.R."/>
            <person name="Godowski P.J."/>
            <person name="Modlin R.L."/>
        </authorList>
    </citation>
    <scope>FUNCTION</scope>
    <scope>SUBCELLULAR LOCATION</scope>
    <scope>DIACYLGLYCEROL AT CYS-17</scope>
    <scope>PALMITOYLATION AT CYS-17</scope>
    <source>
        <strain>TI1-EV</strain>
    </source>
</reference>
<reference key="7">
    <citation type="journal article" date="1997" name="Proc. Natl. Acad. Sci. U.S.A.">
        <title>Crystal structure of Lyme disease antigen outer surface protein A complexed with an Fab.</title>
        <authorList>
            <person name="Li H."/>
            <person name="Dunn J.J."/>
            <person name="Luft B.J."/>
            <person name="Lawson C.L."/>
        </authorList>
    </citation>
    <scope>X-RAY CRYSTALLOGRAPHY (1.95 ANGSTROMS)</scope>
</reference>
<reference key="8">
    <citation type="journal article" date="2000" name="J. Mol. Biol.">
        <title>Structural identification of a key protective B-cell epitope in Lyme disease antigen OspA.</title>
        <authorList>
            <person name="Ding W."/>
            <person name="Huang X."/>
            <person name="Yang X."/>
            <person name="Dunn J.J."/>
            <person name="Luft B.J."/>
            <person name="Koide S."/>
            <person name="Lawson C.L."/>
        </authorList>
    </citation>
    <scope>X-RAY CRYSTALLOGRAPHY (2.68 ANGSTROMS)</scope>
    <source>
        <strain>ATCC 35210 / DSM 4680 / CIP 102532 / B31</strain>
    </source>
</reference>
<protein>
    <recommendedName>
        <fullName evidence="3">Outer surface protein A</fullName>
    </recommendedName>
</protein>
<keyword id="KW-0002">3D-structure</keyword>
<keyword id="KW-0998">Cell outer membrane</keyword>
<keyword id="KW-0449">Lipoprotein</keyword>
<keyword id="KW-0472">Membrane</keyword>
<keyword id="KW-0564">Palmitate</keyword>
<keyword id="KW-0614">Plasmid</keyword>
<keyword id="KW-1185">Reference proteome</keyword>
<keyword id="KW-0732">Signal</keyword>
<evidence type="ECO:0000255" key="1">
    <source>
        <dbReference type="PROSITE-ProRule" id="PRU00303"/>
    </source>
</evidence>
<evidence type="ECO:0000269" key="2">
    <source>
    </source>
</evidence>
<evidence type="ECO:0000303" key="3">
    <source>
    </source>
</evidence>
<evidence type="ECO:0000305" key="4"/>
<evidence type="ECO:0000305" key="5">
    <source>
    </source>
</evidence>
<evidence type="ECO:0000305" key="6">
    <source>
    </source>
</evidence>
<evidence type="ECO:0007829" key="7">
    <source>
        <dbReference type="PDB" id="1OSP"/>
    </source>
</evidence>
<evidence type="ECO:0007829" key="8">
    <source>
        <dbReference type="PDB" id="2I5V"/>
    </source>
</evidence>
<evidence type="ECO:0007829" key="9">
    <source>
        <dbReference type="PDB" id="2I5Z"/>
    </source>
</evidence>
<evidence type="ECO:0007829" key="10">
    <source>
        <dbReference type="PDB" id="2OY7"/>
    </source>
</evidence>
<evidence type="ECO:0007829" key="11">
    <source>
        <dbReference type="PDB" id="3AUM"/>
    </source>
</evidence>
<evidence type="ECO:0007829" key="12">
    <source>
        <dbReference type="PDB" id="6IYS"/>
    </source>
</evidence>
<evidence type="ECO:0007829" key="13">
    <source>
        <dbReference type="PDB" id="6J5R"/>
    </source>
</evidence>
<evidence type="ECO:0007829" key="14">
    <source>
        <dbReference type="PDB" id="7T25"/>
    </source>
</evidence>
<evidence type="ECO:0007829" key="15">
    <source>
        <dbReference type="PDB" id="8TUZ"/>
    </source>
</evidence>
<evidence type="ECO:0007829" key="16">
    <source>
        <dbReference type="PDB" id="8TVD"/>
    </source>
</evidence>
<accession>P0CL66</accession>
<accession>P0C926</accession>
<accession>P14013</accession>
<accession>Q44882</accession>
<accession>Q44964</accession>
<accession>Q44967</accession>
<accession>Q44969</accession>
<accession>Q44971</accession>
<accession>Q57123</accession>
<accession>Q57272</accession>
<sequence>MKKYLLGIGLILALIACKQNVSSLDEKNSVSVDLPGEMKVLVSKEKNKDGKYDLIATVDKLELKGTSDKNNGSGVLEGVKADKSKVKLTISDDLGQTTLEVFKEDGKTLVSKKVTSKDKSSTEEKFNEKGEVSEKIITRADGTRLEYTGIKSDGSGKAKEVLKGYVLEGTLTAEKTTLVVKEGTVTLSKNISKSGEVSVELNDTDSSAATKKTAAWNSGTSTLTITVNSKKTKDLVFTKENTITVQQYDSNGTKLEGSAVEITKLDEIKNALK</sequence>
<feature type="signal peptide" evidence="1">
    <location>
        <begin position="1"/>
        <end position="16"/>
    </location>
</feature>
<feature type="chain" id="PRO_0000018074" description="Outer surface protein A" evidence="1">
    <location>
        <begin position="17"/>
        <end position="273"/>
    </location>
</feature>
<feature type="lipid moiety-binding region" description="N-palmitoyl cysteine" evidence="1 5">
    <location>
        <position position="17"/>
    </location>
</feature>
<feature type="lipid moiety-binding region" description="S-diacylglycerol cysteine" evidence="1 5">
    <location>
        <position position="17"/>
    </location>
</feature>
<feature type="sequence variant" description="In strain: CA7.">
    <original>P</original>
    <variation>S</variation>
    <location>
        <position position="35"/>
    </location>
</feature>
<feature type="sequence variant" description="In strain: PBre and 21343WI.">
    <original>K</original>
    <variation>N</variation>
    <location>
        <position position="39"/>
    </location>
</feature>
<feature type="sequence variant" description="In strain: 42373NY3.">
    <original>D</original>
    <variation>H</variation>
    <location>
        <position position="59"/>
    </location>
</feature>
<feature type="sequence variant" description="In strain: CA8.">
    <original>I</original>
    <variation>V</variation>
    <location>
        <position position="90"/>
    </location>
</feature>
<feature type="sequence variant" description="In strain: PBre.">
    <original>V</original>
    <variation>A</variation>
    <location>
        <position position="114"/>
    </location>
</feature>
<feature type="sequence variant" description="In strain: CA8.">
    <original>N</original>
    <variation>S</variation>
    <location>
        <position position="127"/>
    </location>
</feature>
<feature type="sequence variant" description="In strain: CA8.">
    <original>VS</original>
    <variation>LP</variation>
    <location>
        <begin position="132"/>
        <end position="133"/>
    </location>
</feature>
<feature type="sequence variant" description="In strain: 21343WI.">
    <original>R</original>
    <variation>K</variation>
    <location>
        <position position="144"/>
    </location>
</feature>
<feature type="sequence variant" description="In strain: PBre and 42373NY3.">
    <original>G</original>
    <variation>E</variation>
    <location>
        <position position="149"/>
    </location>
</feature>
<feature type="sequence variant" description="In strain: PBre.">
    <original>G</original>
    <variation>S</variation>
    <location>
        <position position="164"/>
    </location>
</feature>
<feature type="sequence variant" description="In strain: CA8 and 21343WI.">
    <original>E</original>
    <variation>A</variation>
    <location>
        <position position="196"/>
    </location>
</feature>
<feature type="helix" evidence="7">
    <location>
        <begin position="26"/>
        <end position="28"/>
    </location>
</feature>
<feature type="strand" evidence="8">
    <location>
        <begin position="30"/>
        <end position="34"/>
    </location>
</feature>
<feature type="turn" evidence="8">
    <location>
        <begin position="35"/>
        <end position="37"/>
    </location>
</feature>
<feature type="strand" evidence="8">
    <location>
        <begin position="38"/>
        <end position="42"/>
    </location>
</feature>
<feature type="strand" evidence="10">
    <location>
        <begin position="48"/>
        <end position="50"/>
    </location>
</feature>
<feature type="strand" evidence="8">
    <location>
        <begin position="52"/>
        <end position="58"/>
    </location>
</feature>
<feature type="strand" evidence="8">
    <location>
        <begin position="61"/>
        <end position="72"/>
    </location>
</feature>
<feature type="strand" evidence="8">
    <location>
        <begin position="74"/>
        <end position="79"/>
    </location>
</feature>
<feature type="strand" evidence="8">
    <location>
        <begin position="85"/>
        <end position="90"/>
    </location>
</feature>
<feature type="turn" evidence="13">
    <location>
        <begin position="92"/>
        <end position="95"/>
    </location>
</feature>
<feature type="strand" evidence="8">
    <location>
        <begin position="97"/>
        <end position="102"/>
    </location>
</feature>
<feature type="strand" evidence="8">
    <location>
        <begin position="108"/>
        <end position="115"/>
    </location>
</feature>
<feature type="turn" evidence="11">
    <location>
        <begin position="117"/>
        <end position="119"/>
    </location>
</feature>
<feature type="strand" evidence="8">
    <location>
        <begin position="121"/>
        <end position="126"/>
    </location>
</feature>
<feature type="turn" evidence="12">
    <location>
        <begin position="128"/>
        <end position="130"/>
    </location>
</feature>
<feature type="strand" evidence="8">
    <location>
        <begin position="132"/>
        <end position="138"/>
    </location>
</feature>
<feature type="strand" evidence="15">
    <location>
        <begin position="140"/>
        <end position="142"/>
    </location>
</feature>
<feature type="strand" evidence="8">
    <location>
        <begin position="144"/>
        <end position="149"/>
    </location>
</feature>
<feature type="strand" evidence="14">
    <location>
        <begin position="152"/>
        <end position="154"/>
    </location>
</feature>
<feature type="strand" evidence="8">
    <location>
        <begin position="156"/>
        <end position="162"/>
    </location>
</feature>
<feature type="strand" evidence="8">
    <location>
        <begin position="165"/>
        <end position="171"/>
    </location>
</feature>
<feature type="strand" evidence="8">
    <location>
        <begin position="173"/>
        <end position="182"/>
    </location>
</feature>
<feature type="strand" evidence="8">
    <location>
        <begin position="185"/>
        <end position="192"/>
    </location>
</feature>
<feature type="strand" evidence="8">
    <location>
        <begin position="197"/>
        <end position="203"/>
    </location>
</feature>
<feature type="turn" evidence="8">
    <location>
        <begin position="208"/>
        <end position="210"/>
    </location>
</feature>
<feature type="strand" evidence="8">
    <location>
        <begin position="212"/>
        <end position="217"/>
    </location>
</feature>
<feature type="turn" evidence="8">
    <location>
        <begin position="218"/>
        <end position="221"/>
    </location>
</feature>
<feature type="strand" evidence="8">
    <location>
        <begin position="222"/>
        <end position="227"/>
    </location>
</feature>
<feature type="strand" evidence="8">
    <location>
        <begin position="230"/>
        <end position="237"/>
    </location>
</feature>
<feature type="turn" evidence="16">
    <location>
        <begin position="239"/>
        <end position="241"/>
    </location>
</feature>
<feature type="strand" evidence="8">
    <location>
        <begin position="243"/>
        <end position="248"/>
    </location>
</feature>
<feature type="strand" evidence="8">
    <location>
        <begin position="252"/>
        <end position="255"/>
    </location>
</feature>
<feature type="strand" evidence="9">
    <location>
        <begin position="260"/>
        <end position="262"/>
    </location>
</feature>
<feature type="helix" evidence="8">
    <location>
        <begin position="265"/>
        <end position="271"/>
    </location>
</feature>
<name>OSPA_BORBU</name>
<proteinExistence type="evidence at protein level"/>
<geneLocation type="plasmid">
    <name>lp54</name>
</geneLocation>
<gene>
    <name evidence="3" type="primary">ospA</name>
    <name type="ordered locus">BB_A15</name>
</gene>
<organism>
    <name type="scientific">Borreliella burgdorferi (strain ATCC 35210 / DSM 4680 / CIP 102532 / B31)</name>
    <name type="common">Borrelia burgdorferi</name>
    <dbReference type="NCBI Taxonomy" id="224326"/>
    <lineage>
        <taxon>Bacteria</taxon>
        <taxon>Pseudomonadati</taxon>
        <taxon>Spirochaetota</taxon>
        <taxon>Spirochaetia</taxon>
        <taxon>Spirochaetales</taxon>
        <taxon>Borreliaceae</taxon>
        <taxon>Borreliella</taxon>
    </lineage>
</organism>
<dbReference type="EMBL" id="X14407">
    <property type="protein sequence ID" value="CAA32579.1"/>
    <property type="molecule type" value="Genomic_DNA"/>
</dbReference>
<dbReference type="EMBL" id="X85739">
    <property type="protein sequence ID" value="CAA59742.1"/>
    <property type="molecule type" value="Genomic_DNA"/>
</dbReference>
<dbReference type="EMBL" id="X80182">
    <property type="protein sequence ID" value="CAA56467.1"/>
    <property type="molecule type" value="Genomic_DNA"/>
</dbReference>
<dbReference type="EMBL" id="X69606">
    <property type="protein sequence ID" value="CAA49314.1"/>
    <property type="molecule type" value="Genomic_DNA"/>
</dbReference>
<dbReference type="EMBL" id="AE000790">
    <property type="protein sequence ID" value="AAC66260.1"/>
    <property type="molecule type" value="Genomic_DNA"/>
</dbReference>
<dbReference type="EMBL" id="L23136">
    <property type="protein sequence ID" value="AAA22951.1"/>
    <property type="molecule type" value="Genomic_DNA"/>
</dbReference>
<dbReference type="EMBL" id="L23137">
    <property type="protein sequence ID" value="AAA22953.1"/>
    <property type="molecule type" value="Genomic_DNA"/>
</dbReference>
<dbReference type="EMBL" id="L23138">
    <property type="protein sequence ID" value="AAA20947.1"/>
    <property type="molecule type" value="Genomic_DNA"/>
</dbReference>
<dbReference type="EMBL" id="L23139">
    <property type="protein sequence ID" value="AAA20949.1"/>
    <property type="molecule type" value="Genomic_DNA"/>
</dbReference>
<dbReference type="EMBL" id="L23140">
    <property type="protein sequence ID" value="AAA20951.1"/>
    <property type="molecule type" value="Genomic_DNA"/>
</dbReference>
<dbReference type="EMBL" id="L23141">
    <property type="protein sequence ID" value="AAA20953.1"/>
    <property type="molecule type" value="Genomic_DNA"/>
</dbReference>
<dbReference type="EMBL" id="L23142">
    <property type="protein sequence ID" value="AAA20955.1"/>
    <property type="molecule type" value="Genomic_DNA"/>
</dbReference>
<dbReference type="EMBL" id="L23143">
    <property type="protein sequence ID" value="AAA20957.1"/>
    <property type="molecule type" value="Genomic_DNA"/>
</dbReference>
<dbReference type="EMBL" id="L23144">
    <property type="protein sequence ID" value="AAA20959.1"/>
    <property type="molecule type" value="Genomic_DNA"/>
</dbReference>
<dbReference type="PIR" id="F49209">
    <property type="entry name" value="F49209"/>
</dbReference>
<dbReference type="PIR" id="G70208">
    <property type="entry name" value="G70208"/>
</dbReference>
<dbReference type="PIR" id="I40265">
    <property type="entry name" value="I40265"/>
</dbReference>
<dbReference type="PIR" id="S71529">
    <property type="entry name" value="S71529"/>
</dbReference>
<dbReference type="RefSeq" id="NP_045688.1">
    <property type="nucleotide sequence ID" value="NC_001857.2"/>
</dbReference>
<dbReference type="RefSeq" id="WP_010890378.1">
    <property type="nucleotide sequence ID" value="NC_001857.2"/>
</dbReference>
<dbReference type="PDB" id="1FJ1">
    <property type="method" value="X-ray"/>
    <property type="resolution" value="2.68 A"/>
    <property type="chains" value="E/F=18-273"/>
</dbReference>
<dbReference type="PDB" id="1OSP">
    <property type="method" value="X-ray"/>
    <property type="resolution" value="1.95 A"/>
    <property type="chains" value="O=18-273"/>
</dbReference>
<dbReference type="PDB" id="2AF5">
    <property type="method" value="X-ray"/>
    <property type="resolution" value="2.50 A"/>
    <property type="chains" value="A=27-273"/>
</dbReference>
<dbReference type="PDB" id="2FKG">
    <property type="method" value="X-ray"/>
    <property type="resolution" value="2.40 A"/>
    <property type="chains" value="A=27-273"/>
</dbReference>
<dbReference type="PDB" id="2FKJ">
    <property type="method" value="X-ray"/>
    <property type="resolution" value="3.10 A"/>
    <property type="chains" value="A/B/C=27-273"/>
</dbReference>
<dbReference type="PDB" id="2G8C">
    <property type="method" value="X-ray"/>
    <property type="resolution" value="1.15 A"/>
    <property type="chains" value="O=27-273"/>
</dbReference>
<dbReference type="PDB" id="2HKD">
    <property type="method" value="X-ray"/>
    <property type="resolution" value="1.60 A"/>
    <property type="chains" value="A=27-130, A=118-273"/>
</dbReference>
<dbReference type="PDB" id="2I5V">
    <property type="method" value="X-ray"/>
    <property type="resolution" value="1.10 A"/>
    <property type="chains" value="O=27-273"/>
</dbReference>
<dbReference type="PDB" id="2I5Z">
    <property type="method" value="X-ray"/>
    <property type="resolution" value="1.20 A"/>
    <property type="chains" value="O=27-273"/>
</dbReference>
<dbReference type="PDB" id="2OL6">
    <property type="method" value="X-ray"/>
    <property type="resolution" value="1.60 A"/>
    <property type="chains" value="O=27-273"/>
</dbReference>
<dbReference type="PDB" id="2OL7">
    <property type="method" value="X-ray"/>
    <property type="resolution" value="1.35 A"/>
    <property type="chains" value="A/B=27-273"/>
</dbReference>
<dbReference type="PDB" id="2OL8">
    <property type="method" value="X-ray"/>
    <property type="resolution" value="1.90 A"/>
    <property type="chains" value="O=27-273"/>
</dbReference>
<dbReference type="PDB" id="2OY1">
    <property type="method" value="X-ray"/>
    <property type="resolution" value="1.86 A"/>
    <property type="chains" value="O=27-273"/>
</dbReference>
<dbReference type="PDB" id="2OY5">
    <property type="method" value="X-ray"/>
    <property type="resolution" value="1.80 A"/>
    <property type="chains" value="O=27-273"/>
</dbReference>
<dbReference type="PDB" id="2OY7">
    <property type="method" value="X-ray"/>
    <property type="resolution" value="1.55 A"/>
    <property type="chains" value="A=27-273"/>
</dbReference>
<dbReference type="PDB" id="2OY8">
    <property type="method" value="X-ray"/>
    <property type="resolution" value="2.00 A"/>
    <property type="chains" value="A=27-273"/>
</dbReference>
<dbReference type="PDB" id="2OYB">
    <property type="method" value="X-ray"/>
    <property type="resolution" value="1.30 A"/>
    <property type="chains" value="O=27-273"/>
</dbReference>
<dbReference type="PDB" id="2PI3">
    <property type="method" value="X-ray"/>
    <property type="resolution" value="1.40 A"/>
    <property type="chains" value="O=27-273"/>
</dbReference>
<dbReference type="PDB" id="3AUM">
    <property type="method" value="X-ray"/>
    <property type="resolution" value="1.60 A"/>
    <property type="chains" value="O=27-273"/>
</dbReference>
<dbReference type="PDB" id="5B2A">
    <property type="method" value="X-ray"/>
    <property type="resolution" value="1.60 A"/>
    <property type="chains" value="O=27-273"/>
</dbReference>
<dbReference type="PDB" id="6ICS">
    <property type="method" value="X-ray"/>
    <property type="resolution" value="1.40 A"/>
    <property type="chains" value="O=27-273"/>
</dbReference>
<dbReference type="PDB" id="6IDC">
    <property type="method" value="X-ray"/>
    <property type="resolution" value="2.01 A"/>
    <property type="chains" value="A=27-273"/>
</dbReference>
<dbReference type="PDB" id="6IEI">
    <property type="method" value="X-ray"/>
    <property type="resolution" value="2.40 A"/>
    <property type="chains" value="A=27-273"/>
</dbReference>
<dbReference type="PDB" id="6IYS">
    <property type="method" value="X-ray"/>
    <property type="resolution" value="3.00 A"/>
    <property type="chains" value="O=27-273"/>
</dbReference>
<dbReference type="PDB" id="6J47">
    <property type="method" value="X-ray"/>
    <property type="resolution" value="1.90 A"/>
    <property type="chains" value="O=27-273"/>
</dbReference>
<dbReference type="PDB" id="6J48">
    <property type="method" value="X-ray"/>
    <property type="resolution" value="1.20 A"/>
    <property type="chains" value="O=27-273"/>
</dbReference>
<dbReference type="PDB" id="6J49">
    <property type="method" value="X-ray"/>
    <property type="resolution" value="1.60 A"/>
    <property type="chains" value="O=27-273"/>
</dbReference>
<dbReference type="PDB" id="6J5M">
    <property type="method" value="X-ray"/>
    <property type="resolution" value="1.85 A"/>
    <property type="chains" value="O=27-273"/>
</dbReference>
<dbReference type="PDB" id="6J5N">
    <property type="method" value="X-ray"/>
    <property type="resolution" value="1.73 A"/>
    <property type="chains" value="O=27-273"/>
</dbReference>
<dbReference type="PDB" id="6J5O">
    <property type="method" value="X-ray"/>
    <property type="resolution" value="1.90 A"/>
    <property type="chains" value="O=27-273"/>
</dbReference>
<dbReference type="PDB" id="6J5P">
    <property type="method" value="X-ray"/>
    <property type="resolution" value="1.80 A"/>
    <property type="chains" value="O=27-273"/>
</dbReference>
<dbReference type="PDB" id="6J5Q">
    <property type="method" value="X-ray"/>
    <property type="resolution" value="1.80 A"/>
    <property type="chains" value="O=27-273"/>
</dbReference>
<dbReference type="PDB" id="6J5R">
    <property type="method" value="X-ray"/>
    <property type="resolution" value="1.85 A"/>
    <property type="chains" value="O=27-273"/>
</dbReference>
<dbReference type="PDB" id="6J6B">
    <property type="method" value="X-ray"/>
    <property type="resolution" value="1.90 A"/>
    <property type="chains" value="O=27-273"/>
</dbReference>
<dbReference type="PDB" id="6J6C">
    <property type="method" value="X-ray"/>
    <property type="resolution" value="1.60 A"/>
    <property type="chains" value="O=27-273"/>
</dbReference>
<dbReference type="PDB" id="6J6D">
    <property type="method" value="X-ray"/>
    <property type="resolution" value="1.90 A"/>
    <property type="chains" value="O=27-273"/>
</dbReference>
<dbReference type="PDB" id="6J6E">
    <property type="method" value="X-ray"/>
    <property type="resolution" value="1.50 A"/>
    <property type="chains" value="O=27-273"/>
</dbReference>
<dbReference type="PDB" id="6KT1">
    <property type="method" value="X-ray"/>
    <property type="resolution" value="1.43 A"/>
    <property type="chains" value="O=28-273"/>
</dbReference>
<dbReference type="PDB" id="6KWJ">
    <property type="method" value="X-ray"/>
    <property type="resolution" value="1.94 A"/>
    <property type="chains" value="B=27-273"/>
</dbReference>
<dbReference type="PDB" id="6KWU">
    <property type="method" value="X-ray"/>
    <property type="resolution" value="1.43 A"/>
    <property type="chains" value="O=27-273"/>
</dbReference>
<dbReference type="PDB" id="6KWV">
    <property type="method" value="X-ray"/>
    <property type="resolution" value="1.37 A"/>
    <property type="chains" value="O=27-273"/>
</dbReference>
<dbReference type="PDB" id="6LJY">
    <property type="method" value="X-ray"/>
    <property type="resolution" value="1.50 A"/>
    <property type="chains" value="O=27-273"/>
</dbReference>
<dbReference type="PDB" id="7JWG">
    <property type="method" value="X-ray"/>
    <property type="resolution" value="3.05 A"/>
    <property type="chains" value="C/E=23-273"/>
</dbReference>
<dbReference type="PDB" id="7T25">
    <property type="method" value="X-ray"/>
    <property type="resolution" value="2.25 A"/>
    <property type="chains" value="C/E=18-273"/>
</dbReference>
<dbReference type="PDB" id="8TUZ">
    <property type="method" value="X-ray"/>
    <property type="resolution" value="2.19 A"/>
    <property type="chains" value="A=23-273"/>
</dbReference>
<dbReference type="PDB" id="8TV3">
    <property type="method" value="X-ray"/>
    <property type="resolution" value="2.31 A"/>
    <property type="chains" value="A=18-273"/>
</dbReference>
<dbReference type="PDB" id="8TVD">
    <property type="method" value="X-ray"/>
    <property type="resolution" value="3.08 A"/>
    <property type="chains" value="C/E=24-272"/>
</dbReference>
<dbReference type="PDB" id="8TVJ">
    <property type="method" value="X-ray"/>
    <property type="resolution" value="3.17 A"/>
    <property type="chains" value="E=26-273"/>
</dbReference>
<dbReference type="PDBsum" id="1FJ1"/>
<dbReference type="PDBsum" id="1OSP"/>
<dbReference type="PDBsum" id="2AF5"/>
<dbReference type="PDBsum" id="2FKG"/>
<dbReference type="PDBsum" id="2FKJ"/>
<dbReference type="PDBsum" id="2G8C"/>
<dbReference type="PDBsum" id="2HKD"/>
<dbReference type="PDBsum" id="2I5V"/>
<dbReference type="PDBsum" id="2I5Z"/>
<dbReference type="PDBsum" id="2OL6"/>
<dbReference type="PDBsum" id="2OL7"/>
<dbReference type="PDBsum" id="2OL8"/>
<dbReference type="PDBsum" id="2OY1"/>
<dbReference type="PDBsum" id="2OY5"/>
<dbReference type="PDBsum" id="2OY7"/>
<dbReference type="PDBsum" id="2OY8"/>
<dbReference type="PDBsum" id="2OYB"/>
<dbReference type="PDBsum" id="2PI3"/>
<dbReference type="PDBsum" id="3AUM"/>
<dbReference type="PDBsum" id="5B2A"/>
<dbReference type="PDBsum" id="6ICS"/>
<dbReference type="PDBsum" id="6IDC"/>
<dbReference type="PDBsum" id="6IEI"/>
<dbReference type="PDBsum" id="6IYS"/>
<dbReference type="PDBsum" id="6J47"/>
<dbReference type="PDBsum" id="6J48"/>
<dbReference type="PDBsum" id="6J49"/>
<dbReference type="PDBsum" id="6J5M"/>
<dbReference type="PDBsum" id="6J5N"/>
<dbReference type="PDBsum" id="6J5O"/>
<dbReference type="PDBsum" id="6J5P"/>
<dbReference type="PDBsum" id="6J5Q"/>
<dbReference type="PDBsum" id="6J5R"/>
<dbReference type="PDBsum" id="6J6B"/>
<dbReference type="PDBsum" id="6J6C"/>
<dbReference type="PDBsum" id="6J6D"/>
<dbReference type="PDBsum" id="6J6E"/>
<dbReference type="PDBsum" id="6KT1"/>
<dbReference type="PDBsum" id="6KWJ"/>
<dbReference type="PDBsum" id="6KWU"/>
<dbReference type="PDBsum" id="6KWV"/>
<dbReference type="PDBsum" id="6LJY"/>
<dbReference type="PDBsum" id="7JWG"/>
<dbReference type="PDBsum" id="7T25"/>
<dbReference type="PDBsum" id="8TUZ"/>
<dbReference type="PDBsum" id="8TV3"/>
<dbReference type="PDBsum" id="8TVD"/>
<dbReference type="PDBsum" id="8TVJ"/>
<dbReference type="BMRB" id="P0CL66"/>
<dbReference type="SMR" id="P0CL66"/>
<dbReference type="ABCD" id="P0CL66">
    <property type="antibodies" value="3 sequenced antibodies"/>
</dbReference>
<dbReference type="EnsemblBacteria" id="AAC66260">
    <property type="protein sequence ID" value="AAC66260"/>
    <property type="gene ID" value="BB_A15"/>
</dbReference>
<dbReference type="KEGG" id="bbu:BB_A15"/>
<dbReference type="PATRIC" id="fig|224326.49.peg.1532"/>
<dbReference type="HOGENOM" id="CLU_1014382_0_0_12"/>
<dbReference type="OrthoDB" id="351940at2"/>
<dbReference type="EvolutionaryTrace" id="P0CL66"/>
<dbReference type="Proteomes" id="UP000001807">
    <property type="component" value="Plasmid lp54"/>
</dbReference>
<dbReference type="GO" id="GO:0009279">
    <property type="term" value="C:cell outer membrane"/>
    <property type="evidence" value="ECO:0007669"/>
    <property type="project" value="UniProtKB-SubCell"/>
</dbReference>
<dbReference type="GO" id="GO:0009986">
    <property type="term" value="C:cell surface"/>
    <property type="evidence" value="ECO:0007669"/>
    <property type="project" value="UniProtKB-SubCell"/>
</dbReference>
<dbReference type="GO" id="GO:0016020">
    <property type="term" value="C:membrane"/>
    <property type="evidence" value="ECO:0000314"/>
    <property type="project" value="CAFA"/>
</dbReference>
<dbReference type="FunFam" id="2.40.128.160:FF:000001">
    <property type="entry name" value="Outer surface protein A"/>
    <property type="match status" value="1"/>
</dbReference>
<dbReference type="FunFam" id="3.90.930.1:FF:000001">
    <property type="entry name" value="Outer surface protein A"/>
    <property type="match status" value="1"/>
</dbReference>
<dbReference type="Gene3D" id="3.90.930.1">
    <property type="match status" value="1"/>
</dbReference>
<dbReference type="Gene3D" id="2.40.128.160">
    <property type="entry name" value="C1 set domains (antibody constant domain-like)"/>
    <property type="match status" value="1"/>
</dbReference>
<dbReference type="InterPro" id="IPR001809">
    <property type="entry name" value="OM_lipoprot_Borrelia"/>
</dbReference>
<dbReference type="InterPro" id="IPR023322">
    <property type="entry name" value="OM_lipoprot_dom_sf"/>
</dbReference>
<dbReference type="Pfam" id="PF00820">
    <property type="entry name" value="Lipoprotein_1"/>
    <property type="match status" value="1"/>
</dbReference>
<dbReference type="PRINTS" id="PR00968">
    <property type="entry name" value="OUTRSURFACE"/>
</dbReference>
<dbReference type="SUPFAM" id="SSF51087">
    <property type="entry name" value="Outer surface protein"/>
    <property type="match status" value="1"/>
</dbReference>
<dbReference type="PROSITE" id="PS51257">
    <property type="entry name" value="PROKAR_LIPOPROTEIN"/>
    <property type="match status" value="1"/>
</dbReference>
<comment type="function">
    <text evidence="2">Induces host (human and mouse) cytokine release by monocyte cell lines via TLR2 and CD14; nonlipidated protein does not stimulate host cells (PubMed:10426995).</text>
</comment>
<comment type="subcellular location">
    <subcellularLocation>
        <location evidence="6">Cell outer membrane</location>
        <topology evidence="1 5">Lipid-anchor</topology>
    </subcellularLocation>
    <subcellularLocation>
        <location evidence="6">Cell surface</location>
    </subcellularLocation>
</comment>
<comment type="similarity">
    <text evidence="4">Belongs to the OspA lipoprotein family.</text>
</comment>